<proteinExistence type="inferred from homology"/>
<feature type="chain" id="PRO_1000084933" description="DNA polymerase IV">
    <location>
        <begin position="1"/>
        <end position="357"/>
    </location>
</feature>
<feature type="domain" description="UmuC" evidence="1">
    <location>
        <begin position="4"/>
        <end position="185"/>
    </location>
</feature>
<feature type="active site" evidence="1">
    <location>
        <position position="104"/>
    </location>
</feature>
<feature type="binding site" evidence="1">
    <location>
        <position position="8"/>
    </location>
    <ligand>
        <name>Mg(2+)</name>
        <dbReference type="ChEBI" id="CHEBI:18420"/>
    </ligand>
</feature>
<feature type="binding site" evidence="1">
    <location>
        <position position="103"/>
    </location>
    <ligand>
        <name>Mg(2+)</name>
        <dbReference type="ChEBI" id="CHEBI:18420"/>
    </ligand>
</feature>
<feature type="site" description="Substrate discrimination" evidence="1">
    <location>
        <position position="13"/>
    </location>
</feature>
<organism>
    <name type="scientific">Shewanella oneidensis (strain ATCC 700550 / JCM 31522 / CIP 106686 / LMG 19005 / NCIMB 14063 / MR-1)</name>
    <dbReference type="NCBI Taxonomy" id="211586"/>
    <lineage>
        <taxon>Bacteria</taxon>
        <taxon>Pseudomonadati</taxon>
        <taxon>Pseudomonadota</taxon>
        <taxon>Gammaproteobacteria</taxon>
        <taxon>Alteromonadales</taxon>
        <taxon>Shewanellaceae</taxon>
        <taxon>Shewanella</taxon>
    </lineage>
</organism>
<protein>
    <recommendedName>
        <fullName evidence="1">DNA polymerase IV</fullName>
        <shortName evidence="1">Pol IV</shortName>
        <ecNumber evidence="1">2.7.7.7</ecNumber>
    </recommendedName>
</protein>
<reference key="1">
    <citation type="journal article" date="2002" name="Nat. Biotechnol.">
        <title>Genome sequence of the dissimilatory metal ion-reducing bacterium Shewanella oneidensis.</title>
        <authorList>
            <person name="Heidelberg J.F."/>
            <person name="Paulsen I.T."/>
            <person name="Nelson K.E."/>
            <person name="Gaidos E.J."/>
            <person name="Nelson W.C."/>
            <person name="Read T.D."/>
            <person name="Eisen J.A."/>
            <person name="Seshadri R."/>
            <person name="Ward N.L."/>
            <person name="Methe B.A."/>
            <person name="Clayton R.A."/>
            <person name="Meyer T."/>
            <person name="Tsapin A."/>
            <person name="Scott J."/>
            <person name="Beanan M.J."/>
            <person name="Brinkac L.M."/>
            <person name="Daugherty S.C."/>
            <person name="DeBoy R.T."/>
            <person name="Dodson R.J."/>
            <person name="Durkin A.S."/>
            <person name="Haft D.H."/>
            <person name="Kolonay J.F."/>
            <person name="Madupu R."/>
            <person name="Peterson J.D."/>
            <person name="Umayam L.A."/>
            <person name="White O."/>
            <person name="Wolf A.M."/>
            <person name="Vamathevan J.J."/>
            <person name="Weidman J.F."/>
            <person name="Impraim M."/>
            <person name="Lee K."/>
            <person name="Berry K.J."/>
            <person name="Lee C."/>
            <person name="Mueller J."/>
            <person name="Khouri H.M."/>
            <person name="Gill J."/>
            <person name="Utterback T.R."/>
            <person name="McDonald L.A."/>
            <person name="Feldblyum T.V."/>
            <person name="Smith H.O."/>
            <person name="Venter J.C."/>
            <person name="Nealson K.H."/>
            <person name="Fraser C.M."/>
        </authorList>
    </citation>
    <scope>NUCLEOTIDE SEQUENCE [LARGE SCALE GENOMIC DNA]</scope>
    <source>
        <strain>ATCC 700550 / JCM 31522 / CIP 106686 / LMG 19005 / NCIMB 14063 / MR-1</strain>
    </source>
</reference>
<evidence type="ECO:0000255" key="1">
    <source>
        <dbReference type="HAMAP-Rule" id="MF_01113"/>
    </source>
</evidence>
<accession>Q8EHU9</accession>
<gene>
    <name evidence="1" type="primary">dinB</name>
    <name type="ordered locus">SO_1114</name>
</gene>
<name>DPO4_SHEON</name>
<comment type="function">
    <text evidence="1">Poorly processive, error-prone DNA polymerase involved in untargeted mutagenesis. Copies undamaged DNA at stalled replication forks, which arise in vivo from mismatched or misaligned primer ends. These misaligned primers can be extended by PolIV. Exhibits no 3'-5' exonuclease (proofreading) activity. May be involved in translesional synthesis, in conjunction with the beta clamp from PolIII.</text>
</comment>
<comment type="catalytic activity">
    <reaction evidence="1">
        <text>DNA(n) + a 2'-deoxyribonucleoside 5'-triphosphate = DNA(n+1) + diphosphate</text>
        <dbReference type="Rhea" id="RHEA:22508"/>
        <dbReference type="Rhea" id="RHEA-COMP:17339"/>
        <dbReference type="Rhea" id="RHEA-COMP:17340"/>
        <dbReference type="ChEBI" id="CHEBI:33019"/>
        <dbReference type="ChEBI" id="CHEBI:61560"/>
        <dbReference type="ChEBI" id="CHEBI:173112"/>
        <dbReference type="EC" id="2.7.7.7"/>
    </reaction>
</comment>
<comment type="cofactor">
    <cofactor evidence="1">
        <name>Mg(2+)</name>
        <dbReference type="ChEBI" id="CHEBI:18420"/>
    </cofactor>
    <text evidence="1">Binds 2 magnesium ions per subunit.</text>
</comment>
<comment type="subunit">
    <text evidence="1">Monomer.</text>
</comment>
<comment type="subcellular location">
    <subcellularLocation>
        <location evidence="1">Cytoplasm</location>
    </subcellularLocation>
</comment>
<comment type="similarity">
    <text evidence="1">Belongs to the DNA polymerase type-Y family.</text>
</comment>
<dbReference type="EC" id="2.7.7.7" evidence="1"/>
<dbReference type="EMBL" id="AE014299">
    <property type="protein sequence ID" value="AAN54184.1"/>
    <property type="molecule type" value="Genomic_DNA"/>
</dbReference>
<dbReference type="RefSeq" id="NP_716739.1">
    <property type="nucleotide sequence ID" value="NC_004347.2"/>
</dbReference>
<dbReference type="RefSeq" id="WP_011071357.1">
    <property type="nucleotide sequence ID" value="NC_004347.2"/>
</dbReference>
<dbReference type="SMR" id="Q8EHU9"/>
<dbReference type="STRING" id="211586.SO_1114"/>
<dbReference type="PaxDb" id="211586-SO_1114"/>
<dbReference type="KEGG" id="son:SO_1114"/>
<dbReference type="PATRIC" id="fig|211586.12.peg.1069"/>
<dbReference type="eggNOG" id="COG0389">
    <property type="taxonomic scope" value="Bacteria"/>
</dbReference>
<dbReference type="HOGENOM" id="CLU_012348_1_2_6"/>
<dbReference type="OrthoDB" id="9808813at2"/>
<dbReference type="PhylomeDB" id="Q8EHU9"/>
<dbReference type="BioCyc" id="SONE211586:G1GMP-1026-MONOMER"/>
<dbReference type="Proteomes" id="UP000008186">
    <property type="component" value="Chromosome"/>
</dbReference>
<dbReference type="GO" id="GO:0005737">
    <property type="term" value="C:cytoplasm"/>
    <property type="evidence" value="ECO:0007669"/>
    <property type="project" value="UniProtKB-SubCell"/>
</dbReference>
<dbReference type="GO" id="GO:0003684">
    <property type="term" value="F:damaged DNA binding"/>
    <property type="evidence" value="ECO:0007669"/>
    <property type="project" value="InterPro"/>
</dbReference>
<dbReference type="GO" id="GO:0003887">
    <property type="term" value="F:DNA-directed DNA polymerase activity"/>
    <property type="evidence" value="ECO:0000318"/>
    <property type="project" value="GO_Central"/>
</dbReference>
<dbReference type="GO" id="GO:0000287">
    <property type="term" value="F:magnesium ion binding"/>
    <property type="evidence" value="ECO:0007669"/>
    <property type="project" value="UniProtKB-UniRule"/>
</dbReference>
<dbReference type="GO" id="GO:0006261">
    <property type="term" value="P:DNA-templated DNA replication"/>
    <property type="evidence" value="ECO:0007669"/>
    <property type="project" value="UniProtKB-UniRule"/>
</dbReference>
<dbReference type="GO" id="GO:0042276">
    <property type="term" value="P:error-prone translesion synthesis"/>
    <property type="evidence" value="ECO:0000318"/>
    <property type="project" value="GO_Central"/>
</dbReference>
<dbReference type="GO" id="GO:0009432">
    <property type="term" value="P:SOS response"/>
    <property type="evidence" value="ECO:0000318"/>
    <property type="project" value="GO_Central"/>
</dbReference>
<dbReference type="CDD" id="cd03586">
    <property type="entry name" value="PolY_Pol_IV_kappa"/>
    <property type="match status" value="1"/>
</dbReference>
<dbReference type="FunFam" id="1.10.150.20:FF:000019">
    <property type="entry name" value="DNA polymerase IV"/>
    <property type="match status" value="1"/>
</dbReference>
<dbReference type="FunFam" id="3.30.1490.100:FF:000002">
    <property type="entry name" value="DNA polymerase IV"/>
    <property type="match status" value="1"/>
</dbReference>
<dbReference type="FunFam" id="3.30.70.270:FF:000002">
    <property type="entry name" value="DNA polymerase IV"/>
    <property type="match status" value="1"/>
</dbReference>
<dbReference type="FunFam" id="3.40.1170.60:FF:000001">
    <property type="entry name" value="DNA polymerase IV"/>
    <property type="match status" value="1"/>
</dbReference>
<dbReference type="Gene3D" id="3.30.70.270">
    <property type="match status" value="1"/>
</dbReference>
<dbReference type="Gene3D" id="3.40.1170.60">
    <property type="match status" value="1"/>
</dbReference>
<dbReference type="Gene3D" id="1.10.150.20">
    <property type="entry name" value="5' to 3' exonuclease, C-terminal subdomain"/>
    <property type="match status" value="1"/>
</dbReference>
<dbReference type="Gene3D" id="3.30.1490.100">
    <property type="entry name" value="DNA polymerase, Y-family, little finger domain"/>
    <property type="match status" value="1"/>
</dbReference>
<dbReference type="HAMAP" id="MF_01113">
    <property type="entry name" value="DNApol_IV"/>
    <property type="match status" value="1"/>
</dbReference>
<dbReference type="InterPro" id="IPR043502">
    <property type="entry name" value="DNA/RNA_pol_sf"/>
</dbReference>
<dbReference type="InterPro" id="IPR036775">
    <property type="entry name" value="DNA_pol_Y-fam_lit_finger_sf"/>
</dbReference>
<dbReference type="InterPro" id="IPR017961">
    <property type="entry name" value="DNA_pol_Y-fam_little_finger"/>
</dbReference>
<dbReference type="InterPro" id="IPR050116">
    <property type="entry name" value="DNA_polymerase-Y"/>
</dbReference>
<dbReference type="InterPro" id="IPR022880">
    <property type="entry name" value="DNApol_IV"/>
</dbReference>
<dbReference type="InterPro" id="IPR053848">
    <property type="entry name" value="IMS_HHH_1"/>
</dbReference>
<dbReference type="InterPro" id="IPR043128">
    <property type="entry name" value="Rev_trsase/Diguanyl_cyclase"/>
</dbReference>
<dbReference type="InterPro" id="IPR001126">
    <property type="entry name" value="UmuC"/>
</dbReference>
<dbReference type="NCBIfam" id="NF002677">
    <property type="entry name" value="PRK02406.1"/>
    <property type="match status" value="1"/>
</dbReference>
<dbReference type="PANTHER" id="PTHR11076:SF33">
    <property type="entry name" value="DNA POLYMERASE KAPPA"/>
    <property type="match status" value="1"/>
</dbReference>
<dbReference type="PANTHER" id="PTHR11076">
    <property type="entry name" value="DNA REPAIR POLYMERASE UMUC / TRANSFERASE FAMILY MEMBER"/>
    <property type="match status" value="1"/>
</dbReference>
<dbReference type="Pfam" id="PF00817">
    <property type="entry name" value="IMS"/>
    <property type="match status" value="1"/>
</dbReference>
<dbReference type="Pfam" id="PF11799">
    <property type="entry name" value="IMS_C"/>
    <property type="match status" value="1"/>
</dbReference>
<dbReference type="Pfam" id="PF21999">
    <property type="entry name" value="IMS_HHH_1"/>
    <property type="match status" value="1"/>
</dbReference>
<dbReference type="SUPFAM" id="SSF56672">
    <property type="entry name" value="DNA/RNA polymerases"/>
    <property type="match status" value="1"/>
</dbReference>
<dbReference type="SUPFAM" id="SSF100879">
    <property type="entry name" value="Lesion bypass DNA polymerase (Y-family), little finger domain"/>
    <property type="match status" value="1"/>
</dbReference>
<dbReference type="PROSITE" id="PS50173">
    <property type="entry name" value="UMUC"/>
    <property type="match status" value="1"/>
</dbReference>
<sequence>MRKIIHVDMDCYFAAVEMRDFPEYRGKPLAVGGSRERRGVISTCNYEARRFGVRSAMATAYAQKLCPDLILVPGRMQVYKDVSSQIRAIFSRYTELIEPLSLDEAYLDVSDCKLHKGSATLIAEAIRRDILAETGLTASAGVAPVKFLAKVASDLNKPNGQYVIPPDKVPEFIRTLSLRQIPGVGKVTAEKLSSLGLNTCGDVQTYPKQELITRFGKFGAVLIERAQGIDDRGLSVSRERKSVGVETTLAQDIYTLEQCQQVMPGLIQELSTRLSRSAKDRQIHKQVVKLKFSDFKQTTIEHRSNDVSVMMFYELLAQAIARQDGRGIRLLGVAVGLSDKSLISEVDPLQTQLVLSI</sequence>
<keyword id="KW-0963">Cytoplasm</keyword>
<keyword id="KW-0227">DNA damage</keyword>
<keyword id="KW-0234">DNA repair</keyword>
<keyword id="KW-0235">DNA replication</keyword>
<keyword id="KW-0238">DNA-binding</keyword>
<keyword id="KW-0239">DNA-directed DNA polymerase</keyword>
<keyword id="KW-0460">Magnesium</keyword>
<keyword id="KW-0479">Metal-binding</keyword>
<keyword id="KW-0515">Mutator protein</keyword>
<keyword id="KW-0548">Nucleotidyltransferase</keyword>
<keyword id="KW-1185">Reference proteome</keyword>
<keyword id="KW-0808">Transferase</keyword>